<gene>
    <name evidence="1" type="primary">rpsJ</name>
    <name type="ordered locus">Dgeo_1868</name>
</gene>
<sequence length="107" mass="12109">MVAPKIRIKLRGFDHKALDQSASKIVDTVRRTGADVSGPVPLPTRIRRFTVLRSPFKYKDSREHFEIRTHNRLVDIMNPTKKTIDSLMTLDLPTGVDIEIKTVGGRA</sequence>
<feature type="chain" id="PRO_0000258546" description="Small ribosomal subunit protein uS10">
    <location>
        <begin position="1"/>
        <end position="107"/>
    </location>
</feature>
<evidence type="ECO:0000255" key="1">
    <source>
        <dbReference type="HAMAP-Rule" id="MF_00508"/>
    </source>
</evidence>
<evidence type="ECO:0000305" key="2"/>
<protein>
    <recommendedName>
        <fullName evidence="1">Small ribosomal subunit protein uS10</fullName>
    </recommendedName>
    <alternativeName>
        <fullName evidence="2">30S ribosomal protein S10</fullName>
    </alternativeName>
</protein>
<organism>
    <name type="scientific">Deinococcus geothermalis (strain DSM 11300 / CIP 105573 / AG-3a)</name>
    <dbReference type="NCBI Taxonomy" id="319795"/>
    <lineage>
        <taxon>Bacteria</taxon>
        <taxon>Thermotogati</taxon>
        <taxon>Deinococcota</taxon>
        <taxon>Deinococci</taxon>
        <taxon>Deinococcales</taxon>
        <taxon>Deinococcaceae</taxon>
        <taxon>Deinococcus</taxon>
    </lineage>
</organism>
<comment type="function">
    <text evidence="1">Involved in the binding of tRNA to the ribosomes.</text>
</comment>
<comment type="subunit">
    <text evidence="1">Part of the 30S ribosomal subunit.</text>
</comment>
<comment type="similarity">
    <text evidence="1">Belongs to the universal ribosomal protein uS10 family.</text>
</comment>
<reference key="1">
    <citation type="submission" date="2006-04" db="EMBL/GenBank/DDBJ databases">
        <title>Complete sequence of chromosome of Deinococcus geothermalis DSM 11300.</title>
        <authorList>
            <person name="Copeland A."/>
            <person name="Lucas S."/>
            <person name="Lapidus A."/>
            <person name="Barry K."/>
            <person name="Detter J.C."/>
            <person name="Glavina del Rio T."/>
            <person name="Hammon N."/>
            <person name="Israni S."/>
            <person name="Dalin E."/>
            <person name="Tice H."/>
            <person name="Pitluck S."/>
            <person name="Brettin T."/>
            <person name="Bruce D."/>
            <person name="Han C."/>
            <person name="Tapia R."/>
            <person name="Saunders E."/>
            <person name="Gilna P."/>
            <person name="Schmutz J."/>
            <person name="Larimer F."/>
            <person name="Land M."/>
            <person name="Hauser L."/>
            <person name="Kyrpides N."/>
            <person name="Kim E."/>
            <person name="Daly M.J."/>
            <person name="Fredrickson J.K."/>
            <person name="Makarova K.S."/>
            <person name="Gaidamakova E.K."/>
            <person name="Zhai M."/>
            <person name="Richardson P."/>
        </authorList>
    </citation>
    <scope>NUCLEOTIDE SEQUENCE [LARGE SCALE GENOMIC DNA]</scope>
    <source>
        <strain>DSM 11300 / CIP 105573 / AG-3a</strain>
    </source>
</reference>
<name>RS10_DEIGD</name>
<accession>Q1IX71</accession>
<proteinExistence type="inferred from homology"/>
<keyword id="KW-0687">Ribonucleoprotein</keyword>
<keyword id="KW-0689">Ribosomal protein</keyword>
<dbReference type="EMBL" id="CP000359">
    <property type="protein sequence ID" value="ABF46163.1"/>
    <property type="molecule type" value="Genomic_DNA"/>
</dbReference>
<dbReference type="RefSeq" id="WP_010886955.1">
    <property type="nucleotide sequence ID" value="NC_008025.1"/>
</dbReference>
<dbReference type="SMR" id="Q1IX71"/>
<dbReference type="STRING" id="319795.Dgeo_1868"/>
<dbReference type="GeneID" id="69516542"/>
<dbReference type="KEGG" id="dge:Dgeo_1868"/>
<dbReference type="eggNOG" id="COG0051">
    <property type="taxonomic scope" value="Bacteria"/>
</dbReference>
<dbReference type="HOGENOM" id="CLU_122625_1_3_0"/>
<dbReference type="Proteomes" id="UP000002431">
    <property type="component" value="Chromosome"/>
</dbReference>
<dbReference type="GO" id="GO:1990904">
    <property type="term" value="C:ribonucleoprotein complex"/>
    <property type="evidence" value="ECO:0007669"/>
    <property type="project" value="UniProtKB-KW"/>
</dbReference>
<dbReference type="GO" id="GO:0005840">
    <property type="term" value="C:ribosome"/>
    <property type="evidence" value="ECO:0007669"/>
    <property type="project" value="UniProtKB-KW"/>
</dbReference>
<dbReference type="GO" id="GO:0003735">
    <property type="term" value="F:structural constituent of ribosome"/>
    <property type="evidence" value="ECO:0007669"/>
    <property type="project" value="InterPro"/>
</dbReference>
<dbReference type="GO" id="GO:0000049">
    <property type="term" value="F:tRNA binding"/>
    <property type="evidence" value="ECO:0007669"/>
    <property type="project" value="UniProtKB-UniRule"/>
</dbReference>
<dbReference type="GO" id="GO:0006412">
    <property type="term" value="P:translation"/>
    <property type="evidence" value="ECO:0007669"/>
    <property type="project" value="UniProtKB-UniRule"/>
</dbReference>
<dbReference type="FunFam" id="3.30.70.600:FF:000009">
    <property type="entry name" value="30S ribosomal protein S10"/>
    <property type="match status" value="1"/>
</dbReference>
<dbReference type="Gene3D" id="3.30.70.600">
    <property type="entry name" value="Ribosomal protein S10 domain"/>
    <property type="match status" value="1"/>
</dbReference>
<dbReference type="HAMAP" id="MF_00508">
    <property type="entry name" value="Ribosomal_uS10"/>
    <property type="match status" value="1"/>
</dbReference>
<dbReference type="InterPro" id="IPR001848">
    <property type="entry name" value="Ribosomal_uS10"/>
</dbReference>
<dbReference type="InterPro" id="IPR018268">
    <property type="entry name" value="Ribosomal_uS10_CS"/>
</dbReference>
<dbReference type="InterPro" id="IPR027486">
    <property type="entry name" value="Ribosomal_uS10_dom"/>
</dbReference>
<dbReference type="InterPro" id="IPR036838">
    <property type="entry name" value="Ribosomal_uS10_dom_sf"/>
</dbReference>
<dbReference type="NCBIfam" id="NF001861">
    <property type="entry name" value="PRK00596.1"/>
    <property type="match status" value="1"/>
</dbReference>
<dbReference type="NCBIfam" id="TIGR01049">
    <property type="entry name" value="rpsJ_bact"/>
    <property type="match status" value="1"/>
</dbReference>
<dbReference type="PANTHER" id="PTHR11700">
    <property type="entry name" value="30S RIBOSOMAL PROTEIN S10 FAMILY MEMBER"/>
    <property type="match status" value="1"/>
</dbReference>
<dbReference type="Pfam" id="PF00338">
    <property type="entry name" value="Ribosomal_S10"/>
    <property type="match status" value="1"/>
</dbReference>
<dbReference type="PRINTS" id="PR00971">
    <property type="entry name" value="RIBOSOMALS10"/>
</dbReference>
<dbReference type="SMART" id="SM01403">
    <property type="entry name" value="Ribosomal_S10"/>
    <property type="match status" value="1"/>
</dbReference>
<dbReference type="SUPFAM" id="SSF54999">
    <property type="entry name" value="Ribosomal protein S10"/>
    <property type="match status" value="1"/>
</dbReference>
<dbReference type="PROSITE" id="PS00361">
    <property type="entry name" value="RIBOSOMAL_S10"/>
    <property type="match status" value="1"/>
</dbReference>